<evidence type="ECO:0000255" key="1"/>
<evidence type="ECO:0000255" key="2">
    <source>
        <dbReference type="HAMAP-Rule" id="MF_00684"/>
    </source>
</evidence>
<evidence type="ECO:0000305" key="3"/>
<protein>
    <recommendedName>
        <fullName evidence="2">N(4)-acetylcytidine amidohydrolase</fullName>
        <shortName evidence="2">ac4C amidohydrolase</shortName>
        <ecNumber evidence="2">3.5.1.135</ecNumber>
    </recommendedName>
</protein>
<sequence>MQPNDITFYQRFEADILAGHKTISIRDDSESHFKAGDILRVGRFEDNQYFCNIEVLSVSPITLDELTQPHAKQENMGLDELKEVIRGIYPNEIIFWVIQFSLKEYFNEEKCVREIIITDRKFN</sequence>
<reference key="1">
    <citation type="journal article" date="1994" name="Gene">
        <title>Cloning, analysis and expression of the HindIII R-M-encoding genes.</title>
        <authorList>
            <person name="Nwankwo D.O."/>
            <person name="Moran L.S."/>
            <person name="Slatko B.E."/>
            <person name="Waite-Rees P.A."/>
            <person name="Dorner L.F."/>
            <person name="Benner J.S."/>
            <person name="Wilson G.G."/>
        </authorList>
    </citation>
    <scope>NUCLEOTIDE SEQUENCE [GENOMIC DNA]</scope>
    <source>
        <strain>ATCC 51907 / DSM 11121 / KW20 / Rd</strain>
    </source>
</reference>
<reference key="2">
    <citation type="journal article" date="1995" name="Science">
        <title>Whole-genome random sequencing and assembly of Haemophilus influenzae Rd.</title>
        <authorList>
            <person name="Fleischmann R.D."/>
            <person name="Adams M.D."/>
            <person name="White O."/>
            <person name="Clayton R.A."/>
            <person name="Kirkness E.F."/>
            <person name="Kerlavage A.R."/>
            <person name="Bult C.J."/>
            <person name="Tomb J.-F."/>
            <person name="Dougherty B.A."/>
            <person name="Merrick J.M."/>
            <person name="McKenney K."/>
            <person name="Sutton G.G."/>
            <person name="FitzHugh W."/>
            <person name="Fields C.A."/>
            <person name="Gocayne J.D."/>
            <person name="Scott J.D."/>
            <person name="Shirley R."/>
            <person name="Liu L.-I."/>
            <person name="Glodek A."/>
            <person name="Kelley J.M."/>
            <person name="Weidman J.F."/>
            <person name="Phillips C.A."/>
            <person name="Spriggs T."/>
            <person name="Hedblom E."/>
            <person name="Cotton M.D."/>
            <person name="Utterback T.R."/>
            <person name="Hanna M.C."/>
            <person name="Nguyen D.T."/>
            <person name="Saudek D.M."/>
            <person name="Brandon R.C."/>
            <person name="Fine L.D."/>
            <person name="Fritchman J.L."/>
            <person name="Fuhrmann J.L."/>
            <person name="Geoghagen N.S.M."/>
            <person name="Gnehm C.L."/>
            <person name="McDonald L.A."/>
            <person name="Small K.V."/>
            <person name="Fraser C.M."/>
            <person name="Smith H.O."/>
            <person name="Venter J.C."/>
        </authorList>
    </citation>
    <scope>NUCLEOTIDE SEQUENCE [LARGE SCALE GENOMIC DNA]</scope>
    <source>
        <strain>ATCC 51907 / DSM 11121 / KW20 / Rd</strain>
    </source>
</reference>
<reference key="3">
    <citation type="journal article" date="2000" name="Electrophoresis">
        <title>Two-dimensional map of the proteome of Haemophilus influenzae.</title>
        <authorList>
            <person name="Langen H."/>
            <person name="Takacs B."/>
            <person name="Evers S."/>
            <person name="Berndt P."/>
            <person name="Lahm H.W."/>
            <person name="Wipf B."/>
            <person name="Gray C."/>
            <person name="Fountoulakis M."/>
        </authorList>
    </citation>
    <scope>IDENTIFICATION BY MASS SPECTROMETRY</scope>
    <source>
        <strain>ATCC 51907 / DSM 11121 / KW20 / Rd</strain>
    </source>
</reference>
<comment type="function">
    <text evidence="2">Catalyzes the hydrolysis of N(4)-acetylcytidine (ac4C).</text>
</comment>
<comment type="catalytic activity">
    <reaction evidence="2">
        <text>N(4)-acetylcytidine + H2O = cytidine + acetate + H(+)</text>
        <dbReference type="Rhea" id="RHEA:62932"/>
        <dbReference type="ChEBI" id="CHEBI:15377"/>
        <dbReference type="ChEBI" id="CHEBI:15378"/>
        <dbReference type="ChEBI" id="CHEBI:17562"/>
        <dbReference type="ChEBI" id="CHEBI:30089"/>
        <dbReference type="ChEBI" id="CHEBI:70989"/>
        <dbReference type="EC" id="3.5.1.135"/>
    </reaction>
</comment>
<comment type="catalytic activity">
    <reaction evidence="2">
        <text>N(4)-acetyl-2'-deoxycytidine + H2O = 2'-deoxycytidine + acetate + H(+)</text>
        <dbReference type="Rhea" id="RHEA:62936"/>
        <dbReference type="ChEBI" id="CHEBI:15377"/>
        <dbReference type="ChEBI" id="CHEBI:15378"/>
        <dbReference type="ChEBI" id="CHEBI:15698"/>
        <dbReference type="ChEBI" id="CHEBI:30089"/>
        <dbReference type="ChEBI" id="CHEBI:146133"/>
        <dbReference type="EC" id="3.5.1.135"/>
    </reaction>
</comment>
<comment type="catalytic activity">
    <reaction evidence="2">
        <text>N(4)-acetylcytosine + H2O = cytosine + acetate + H(+)</text>
        <dbReference type="Rhea" id="RHEA:62940"/>
        <dbReference type="ChEBI" id="CHEBI:15377"/>
        <dbReference type="ChEBI" id="CHEBI:15378"/>
        <dbReference type="ChEBI" id="CHEBI:16040"/>
        <dbReference type="ChEBI" id="CHEBI:30089"/>
        <dbReference type="ChEBI" id="CHEBI:146134"/>
        <dbReference type="EC" id="3.5.1.135"/>
    </reaction>
</comment>
<comment type="similarity">
    <text evidence="2">Belongs to the N(4)-acetylcytidine amidohydrolase family.</text>
</comment>
<keyword id="KW-0378">Hydrolase</keyword>
<keyword id="KW-1185">Reference proteome</keyword>
<feature type="chain" id="PRO_0000214603" description="N(4)-acetylcytidine amidohydrolase">
    <location>
        <begin position="1"/>
        <end position="123"/>
    </location>
</feature>
<feature type="domain" description="ASCH" evidence="1">
    <location>
        <begin position="6"/>
        <end position="101"/>
    </location>
</feature>
<feature type="active site" description="Proton acceptor" evidence="2">
    <location>
        <position position="21"/>
    </location>
</feature>
<feature type="active site" description="Nucleophile" evidence="2">
    <location>
        <position position="24"/>
    </location>
</feature>
<feature type="active site" description="Proton donor" evidence="2">
    <location>
        <position position="74"/>
    </location>
</feature>
<feature type="sequence conflict" description="In Ref. 1." evidence="3" ref="1">
    <original>P</original>
    <variation>Q</variation>
    <location>
        <position position="69"/>
    </location>
</feature>
<proteinExistence type="evidence at protein level"/>
<gene>
    <name type="ordered locus">HI_1394</name>
</gene>
<name>AC4CH_HAEIN</name>
<organism>
    <name type="scientific">Haemophilus influenzae (strain ATCC 51907 / DSM 11121 / KW20 / Rd)</name>
    <dbReference type="NCBI Taxonomy" id="71421"/>
    <lineage>
        <taxon>Bacteria</taxon>
        <taxon>Pseudomonadati</taxon>
        <taxon>Pseudomonadota</taxon>
        <taxon>Gammaproteobacteria</taxon>
        <taxon>Pasteurellales</taxon>
        <taxon>Pasteurellaceae</taxon>
        <taxon>Haemophilus</taxon>
    </lineage>
</organism>
<dbReference type="EC" id="3.5.1.135" evidence="2"/>
<dbReference type="EMBL" id="L15391">
    <property type="status" value="NOT_ANNOTATED_CDS"/>
    <property type="molecule type" value="Genomic_DNA"/>
</dbReference>
<dbReference type="EMBL" id="L42023">
    <property type="protein sequence ID" value="AAC23041.1"/>
    <property type="molecule type" value="Genomic_DNA"/>
</dbReference>
<dbReference type="PIR" id="B64027">
    <property type="entry name" value="B64027"/>
</dbReference>
<dbReference type="RefSeq" id="NP_439548.1">
    <property type="nucleotide sequence ID" value="NC_000907.1"/>
</dbReference>
<dbReference type="SMR" id="P44172"/>
<dbReference type="STRING" id="71421.HI_1394"/>
<dbReference type="EnsemblBacteria" id="AAC23041">
    <property type="protein sequence ID" value="AAC23041"/>
    <property type="gene ID" value="HI_1394"/>
</dbReference>
<dbReference type="KEGG" id="hin:HI_1394"/>
<dbReference type="PATRIC" id="fig|71421.8.peg.1453"/>
<dbReference type="eggNOG" id="COG3097">
    <property type="taxonomic scope" value="Bacteria"/>
</dbReference>
<dbReference type="HOGENOM" id="CLU_152586_0_0_6"/>
<dbReference type="OrthoDB" id="8590202at2"/>
<dbReference type="PhylomeDB" id="P44172"/>
<dbReference type="BioCyc" id="HINF71421:G1GJ1-1422-MONOMER"/>
<dbReference type="Proteomes" id="UP000000579">
    <property type="component" value="Chromosome"/>
</dbReference>
<dbReference type="GO" id="GO:0005829">
    <property type="term" value="C:cytosol"/>
    <property type="evidence" value="ECO:0000318"/>
    <property type="project" value="GO_Central"/>
</dbReference>
<dbReference type="GO" id="GO:0016813">
    <property type="term" value="F:hydrolase activity, acting on carbon-nitrogen (but not peptide) bonds, in linear amidines"/>
    <property type="evidence" value="ECO:0007669"/>
    <property type="project" value="UniProtKB-UniRule"/>
</dbReference>
<dbReference type="GO" id="GO:0106251">
    <property type="term" value="F:N4-acetylcytidine amidohydrolase activity"/>
    <property type="evidence" value="ECO:0007669"/>
    <property type="project" value="RHEA"/>
</dbReference>
<dbReference type="CDD" id="cd06552">
    <property type="entry name" value="ASCH_yqfb_like"/>
    <property type="match status" value="1"/>
</dbReference>
<dbReference type="FunFam" id="2.30.130.30:FF:000001">
    <property type="entry name" value="UPF0267 protein YqfB"/>
    <property type="match status" value="1"/>
</dbReference>
<dbReference type="Gene3D" id="2.30.130.30">
    <property type="entry name" value="Hypothetical protein"/>
    <property type="match status" value="1"/>
</dbReference>
<dbReference type="HAMAP" id="MF_00684">
    <property type="entry name" value="ac4C_amidohydr"/>
    <property type="match status" value="1"/>
</dbReference>
<dbReference type="InterPro" id="IPR008314">
    <property type="entry name" value="AC4CH"/>
</dbReference>
<dbReference type="InterPro" id="IPR007374">
    <property type="entry name" value="ASCH_domain"/>
</dbReference>
<dbReference type="InterPro" id="IPR015947">
    <property type="entry name" value="PUA-like_sf"/>
</dbReference>
<dbReference type="NCBIfam" id="NF003443">
    <property type="entry name" value="PRK04980.1"/>
    <property type="match status" value="1"/>
</dbReference>
<dbReference type="PANTHER" id="PTHR38088">
    <property type="entry name" value="UCP029143 FAMILY PROTEIN"/>
    <property type="match status" value="1"/>
</dbReference>
<dbReference type="PANTHER" id="PTHR38088:SF2">
    <property type="entry name" value="UCP029143 FAMILY PROTEIN"/>
    <property type="match status" value="1"/>
</dbReference>
<dbReference type="Pfam" id="PF04266">
    <property type="entry name" value="ASCH"/>
    <property type="match status" value="1"/>
</dbReference>
<dbReference type="PIRSF" id="PIRSF029143">
    <property type="entry name" value="UCP029143"/>
    <property type="match status" value="1"/>
</dbReference>
<dbReference type="SMART" id="SM01022">
    <property type="entry name" value="ASCH"/>
    <property type="match status" value="1"/>
</dbReference>
<dbReference type="SUPFAM" id="SSF88697">
    <property type="entry name" value="PUA domain-like"/>
    <property type="match status" value="1"/>
</dbReference>
<accession>P44172</accession>